<gene>
    <name evidence="5" type="primary">cdaR</name>
    <name type="synonym">ybbR</name>
    <name type="ordered locus">BSU01760</name>
</gene>
<keyword id="KW-1003">Cell membrane</keyword>
<keyword id="KW-0472">Membrane</keyword>
<keyword id="KW-1185">Reference proteome</keyword>
<keyword id="KW-0677">Repeat</keyword>
<keyword id="KW-0812">Transmembrane</keyword>
<keyword id="KW-1133">Transmembrane helix</keyword>
<dbReference type="EMBL" id="AB006424">
    <property type="protein sequence ID" value="BAA33068.1"/>
    <property type="status" value="ALT_FRAME"/>
    <property type="molecule type" value="Genomic_DNA"/>
</dbReference>
<dbReference type="EMBL" id="AL009126">
    <property type="protein sequence ID" value="CAB11952.2"/>
    <property type="molecule type" value="Genomic_DNA"/>
</dbReference>
<dbReference type="RefSeq" id="NP_388057.2">
    <property type="nucleotide sequence ID" value="NC_000964.3"/>
</dbReference>
<dbReference type="RefSeq" id="WP_003234947.1">
    <property type="nucleotide sequence ID" value="NZ_OZ025638.1"/>
</dbReference>
<dbReference type="SMR" id="O34659"/>
<dbReference type="FunCoup" id="O34659">
    <property type="interactions" value="19"/>
</dbReference>
<dbReference type="STRING" id="224308.BSU01760"/>
<dbReference type="PaxDb" id="224308-BSU01760"/>
<dbReference type="DNASU" id="938867"/>
<dbReference type="EnsemblBacteria" id="CAB11952">
    <property type="protein sequence ID" value="CAB11952"/>
    <property type="gene ID" value="BSU_01760"/>
</dbReference>
<dbReference type="GeneID" id="938867"/>
<dbReference type="KEGG" id="bsu:BSU01760"/>
<dbReference type="PATRIC" id="fig|224308.179.peg.182"/>
<dbReference type="eggNOG" id="COG4856">
    <property type="taxonomic scope" value="Bacteria"/>
</dbReference>
<dbReference type="InParanoid" id="O34659"/>
<dbReference type="OrthoDB" id="2960905at2"/>
<dbReference type="PhylomeDB" id="O34659"/>
<dbReference type="BioCyc" id="BSUB:BSU01760-MONOMER"/>
<dbReference type="Proteomes" id="UP000001570">
    <property type="component" value="Chromosome"/>
</dbReference>
<dbReference type="GO" id="GO:0005886">
    <property type="term" value="C:plasma membrane"/>
    <property type="evidence" value="ECO:0007669"/>
    <property type="project" value="UniProtKB-SubCell"/>
</dbReference>
<dbReference type="GO" id="GO:0045762">
    <property type="term" value="P:positive regulation of adenylate cyclase activity"/>
    <property type="evidence" value="ECO:0000314"/>
    <property type="project" value="UniProtKB"/>
</dbReference>
<dbReference type="FunFam" id="2.170.120.30:FF:000006">
    <property type="entry name" value="YbbR-like domain-containing protein YbbR"/>
    <property type="match status" value="1"/>
</dbReference>
<dbReference type="FunFam" id="2.170.120.40:FF:000006">
    <property type="entry name" value="YbbR-like domain-containing protein YbbR"/>
    <property type="match status" value="1"/>
</dbReference>
<dbReference type="Gene3D" id="2.170.120.30">
    <property type="match status" value="2"/>
</dbReference>
<dbReference type="Gene3D" id="2.170.120.40">
    <property type="entry name" value="YbbR-like domain"/>
    <property type="match status" value="2"/>
</dbReference>
<dbReference type="InterPro" id="IPR053154">
    <property type="entry name" value="c-di-AMP_regulator"/>
</dbReference>
<dbReference type="InterPro" id="IPR012505">
    <property type="entry name" value="YbbR"/>
</dbReference>
<dbReference type="PANTHER" id="PTHR37804">
    <property type="entry name" value="CDAA REGULATORY PROTEIN CDAR"/>
    <property type="match status" value="1"/>
</dbReference>
<dbReference type="PANTHER" id="PTHR37804:SF1">
    <property type="entry name" value="CDAA REGULATORY PROTEIN CDAR"/>
    <property type="match status" value="1"/>
</dbReference>
<dbReference type="Pfam" id="PF07949">
    <property type="entry name" value="YbbR"/>
    <property type="match status" value="3"/>
</dbReference>
<feature type="chain" id="PRO_0000384386" description="CdaA regulatory protein CdaR">
    <location>
        <begin position="1"/>
        <end position="483"/>
    </location>
</feature>
<feature type="transmembrane region" description="Helical" evidence="1">
    <location>
        <begin position="9"/>
        <end position="26"/>
    </location>
</feature>
<feature type="domain" description="YbbR-like 1">
    <location>
        <begin position="55"/>
        <end position="135"/>
    </location>
</feature>
<feature type="domain" description="YbbR-like 2">
    <location>
        <begin position="143"/>
        <end position="228"/>
    </location>
</feature>
<feature type="domain" description="YbbR-like 3">
    <location>
        <begin position="237"/>
        <end position="316"/>
    </location>
</feature>
<feature type="domain" description="YbbR-like 4">
    <location>
        <begin position="329"/>
        <end position="394"/>
    </location>
</feature>
<feature type="region of interest" description="Disordered" evidence="2">
    <location>
        <begin position="410"/>
        <end position="483"/>
    </location>
</feature>
<feature type="compositionally biased region" description="Low complexity" evidence="2">
    <location>
        <begin position="413"/>
        <end position="430"/>
    </location>
</feature>
<feature type="compositionally biased region" description="Basic and acidic residues" evidence="2">
    <location>
        <begin position="431"/>
        <end position="454"/>
    </location>
</feature>
<feature type="sequence conflict" description="In Ref. 1; BAA33068." evidence="6" ref="1">
    <original>V</original>
    <variation>H</variation>
    <location>
        <position position="186"/>
    </location>
</feature>
<organism>
    <name type="scientific">Bacillus subtilis (strain 168)</name>
    <dbReference type="NCBI Taxonomy" id="224308"/>
    <lineage>
        <taxon>Bacteria</taxon>
        <taxon>Bacillati</taxon>
        <taxon>Bacillota</taxon>
        <taxon>Bacilli</taxon>
        <taxon>Bacillales</taxon>
        <taxon>Bacillaceae</taxon>
        <taxon>Bacillus</taxon>
    </lineage>
</organism>
<protein>
    <recommendedName>
        <fullName evidence="6">CdaA regulatory protein CdaR</fullName>
    </recommendedName>
    <alternativeName>
        <fullName>YbbR-like domain-containing protein YbbR</fullName>
    </alternativeName>
    <alternativeName>
        <fullName evidence="5">c-di-AMP synthase A regulator</fullName>
    </alternativeName>
</protein>
<name>CDAR_BACSU</name>
<proteinExistence type="evidence at protein level"/>
<evidence type="ECO:0000255" key="1"/>
<evidence type="ECO:0000256" key="2">
    <source>
        <dbReference type="SAM" id="MobiDB-lite"/>
    </source>
</evidence>
<evidence type="ECO:0000269" key="3">
    <source>
    </source>
</evidence>
<evidence type="ECO:0000269" key="4">
    <source>
    </source>
</evidence>
<evidence type="ECO:0000303" key="5">
    <source>
    </source>
</evidence>
<evidence type="ECO:0000305" key="6"/>
<accession>O34659</accession>
<accession>O87088</accession>
<sequence length="483" mass="52907">MDKFLNNRWAVKIIALLFALLLYVAVNSNQAPTPKKPGESFFPTSTTDEATLTDIPVKAYYDDENYVVTGVPQTVNVTIKGSTSAVKKARQTKNFEIYADMEHLKTGTHKVELKAKNVSDGLTISINPSVTTVTIQERTTKSFPVEVEYYNKSKMKKGYSPEQPIVSPKNVQITGSKNVIDNISLVKASVNLENADETIEKEAKVTVYDKDGNALPVDVEPSVIKITVPVTSPSKKVPFKIERTGSLPDGVSIANIESSPSEVTVYGSQDVLDSLEFIDGVSLDLSKINKDSDIEADIPLPDGVKKISPSKVTLHIEVDSEADQKFENVPIKTVGLSSSQNIEFLDPESQAIDVTAKGSPTNINKLKKSDIELYVNVSDLEDGEHSVKLEVNGPQNVTWSLGRKNAKIKLTSKKSNTSTNDNSSNTSGNQDTDKQTNDQKNNQQEDTKNTDKNNNDQNQDGNKDQNQDQDEDESTANSQSSSE</sequence>
<comment type="function">
    <text evidence="3 4">Upon coexpression in E.coli stimulates the diadenylate cyclase activity of CdaA about 20-fold (PubMed:23192352). In B.subtilis c-di-AMP is a second messenger that mediates growth, DNA repair and cell wall homeostasis; it is toxic when present in excess (PubMed:26240071).</text>
</comment>
<comment type="subunit">
    <text evidence="3 4">Interacts with CdaA (PubMed:23192352, PubMed:26240071).</text>
</comment>
<comment type="subcellular location">
    <subcellularLocation>
        <location evidence="1">Cell membrane</location>
        <topology evidence="1">Single-pass membrane protein</topology>
    </subcellularLocation>
</comment>
<comment type="induction">
    <text evidence="3">Constitutively expressed, part of the cdaA-cdaR-glmM-glmS operon (PubMed:23192352).</text>
</comment>
<comment type="disruption phenotype">
    <text evidence="4">No visible phenotype.</text>
</comment>
<comment type="sequence caution" evidence="6">
    <conflict type="frameshift">
        <sequence resource="EMBL-CDS" id="BAA33068"/>
    </conflict>
</comment>
<reference key="1">
    <citation type="submission" date="1997-07" db="EMBL/GenBank/DDBJ databases">
        <title>Sequence analysis of the 70kb region between 17 and 23 degree of the Bacillus subtilis chromosome.</title>
        <authorList>
            <person name="Haga K."/>
            <person name="Liu H."/>
            <person name="Yasumoto K."/>
            <person name="Takahashi H."/>
            <person name="Yoshikawa H."/>
        </authorList>
    </citation>
    <scope>NUCLEOTIDE SEQUENCE [GENOMIC DNA]</scope>
    <source>
        <strain>168</strain>
    </source>
</reference>
<reference key="2">
    <citation type="journal article" date="1997" name="Nature">
        <title>The complete genome sequence of the Gram-positive bacterium Bacillus subtilis.</title>
        <authorList>
            <person name="Kunst F."/>
            <person name="Ogasawara N."/>
            <person name="Moszer I."/>
            <person name="Albertini A.M."/>
            <person name="Alloni G."/>
            <person name="Azevedo V."/>
            <person name="Bertero M.G."/>
            <person name="Bessieres P."/>
            <person name="Bolotin A."/>
            <person name="Borchert S."/>
            <person name="Borriss R."/>
            <person name="Boursier L."/>
            <person name="Brans A."/>
            <person name="Braun M."/>
            <person name="Brignell S.C."/>
            <person name="Bron S."/>
            <person name="Brouillet S."/>
            <person name="Bruschi C.V."/>
            <person name="Caldwell B."/>
            <person name="Capuano V."/>
            <person name="Carter N.M."/>
            <person name="Choi S.-K."/>
            <person name="Codani J.-J."/>
            <person name="Connerton I.F."/>
            <person name="Cummings N.J."/>
            <person name="Daniel R.A."/>
            <person name="Denizot F."/>
            <person name="Devine K.M."/>
            <person name="Duesterhoeft A."/>
            <person name="Ehrlich S.D."/>
            <person name="Emmerson P.T."/>
            <person name="Entian K.-D."/>
            <person name="Errington J."/>
            <person name="Fabret C."/>
            <person name="Ferrari E."/>
            <person name="Foulger D."/>
            <person name="Fritz C."/>
            <person name="Fujita M."/>
            <person name="Fujita Y."/>
            <person name="Fuma S."/>
            <person name="Galizzi A."/>
            <person name="Galleron N."/>
            <person name="Ghim S.-Y."/>
            <person name="Glaser P."/>
            <person name="Goffeau A."/>
            <person name="Golightly E.J."/>
            <person name="Grandi G."/>
            <person name="Guiseppi G."/>
            <person name="Guy B.J."/>
            <person name="Haga K."/>
            <person name="Haiech J."/>
            <person name="Harwood C.R."/>
            <person name="Henaut A."/>
            <person name="Hilbert H."/>
            <person name="Holsappel S."/>
            <person name="Hosono S."/>
            <person name="Hullo M.-F."/>
            <person name="Itaya M."/>
            <person name="Jones L.-M."/>
            <person name="Joris B."/>
            <person name="Karamata D."/>
            <person name="Kasahara Y."/>
            <person name="Klaerr-Blanchard M."/>
            <person name="Klein C."/>
            <person name="Kobayashi Y."/>
            <person name="Koetter P."/>
            <person name="Koningstein G."/>
            <person name="Krogh S."/>
            <person name="Kumano M."/>
            <person name="Kurita K."/>
            <person name="Lapidus A."/>
            <person name="Lardinois S."/>
            <person name="Lauber J."/>
            <person name="Lazarevic V."/>
            <person name="Lee S.-M."/>
            <person name="Levine A."/>
            <person name="Liu H."/>
            <person name="Masuda S."/>
            <person name="Mauel C."/>
            <person name="Medigue C."/>
            <person name="Medina N."/>
            <person name="Mellado R.P."/>
            <person name="Mizuno M."/>
            <person name="Moestl D."/>
            <person name="Nakai S."/>
            <person name="Noback M."/>
            <person name="Noone D."/>
            <person name="O'Reilly M."/>
            <person name="Ogawa K."/>
            <person name="Ogiwara A."/>
            <person name="Oudega B."/>
            <person name="Park S.-H."/>
            <person name="Parro V."/>
            <person name="Pohl T.M."/>
            <person name="Portetelle D."/>
            <person name="Porwollik S."/>
            <person name="Prescott A.M."/>
            <person name="Presecan E."/>
            <person name="Pujic P."/>
            <person name="Purnelle B."/>
            <person name="Rapoport G."/>
            <person name="Rey M."/>
            <person name="Reynolds S."/>
            <person name="Rieger M."/>
            <person name="Rivolta C."/>
            <person name="Rocha E."/>
            <person name="Roche B."/>
            <person name="Rose M."/>
            <person name="Sadaie Y."/>
            <person name="Sato T."/>
            <person name="Scanlan E."/>
            <person name="Schleich S."/>
            <person name="Schroeter R."/>
            <person name="Scoffone F."/>
            <person name="Sekiguchi J."/>
            <person name="Sekowska A."/>
            <person name="Seror S.J."/>
            <person name="Serror P."/>
            <person name="Shin B.-S."/>
            <person name="Soldo B."/>
            <person name="Sorokin A."/>
            <person name="Tacconi E."/>
            <person name="Takagi T."/>
            <person name="Takahashi H."/>
            <person name="Takemaru K."/>
            <person name="Takeuchi M."/>
            <person name="Tamakoshi A."/>
            <person name="Tanaka T."/>
            <person name="Terpstra P."/>
            <person name="Tognoni A."/>
            <person name="Tosato V."/>
            <person name="Uchiyama S."/>
            <person name="Vandenbol M."/>
            <person name="Vannier F."/>
            <person name="Vassarotti A."/>
            <person name="Viari A."/>
            <person name="Wambutt R."/>
            <person name="Wedler E."/>
            <person name="Wedler H."/>
            <person name="Weitzenegger T."/>
            <person name="Winters P."/>
            <person name="Wipat A."/>
            <person name="Yamamoto H."/>
            <person name="Yamane K."/>
            <person name="Yasumoto K."/>
            <person name="Yata K."/>
            <person name="Yoshida K."/>
            <person name="Yoshikawa H.-F."/>
            <person name="Zumstein E."/>
            <person name="Yoshikawa H."/>
            <person name="Danchin A."/>
        </authorList>
    </citation>
    <scope>NUCLEOTIDE SEQUENCE [LARGE SCALE GENOMIC DNA]</scope>
    <source>
        <strain>168</strain>
    </source>
</reference>
<reference key="3">
    <citation type="journal article" date="2013" name="J. Biol. Chem.">
        <title>Cyclic di-AMP homeostasis in Bacillus subtilis: both lack and high level accumulation of the nucleotide are detrimental for cell growth.</title>
        <authorList>
            <person name="Mehne F.M."/>
            <person name="Gunka K."/>
            <person name="Eilers H."/>
            <person name="Herzberg C."/>
            <person name="Kaever V."/>
            <person name="Stuelke J."/>
        </authorList>
    </citation>
    <scope>FUNCTION</scope>
    <scope>INTERACTION WITH CDAA</scope>
    <scope>INDUCTION</scope>
    <scope>DISRUPTION PHENOTYPE</scope>
    <source>
        <strain>168</strain>
    </source>
</reference>
<reference key="4">
    <citation type="journal article" date="2015" name="J. Bacteriol.">
        <title>An essential poison: synthesis and degradation of cyclic di-AMP in Bacillus subtilis.</title>
        <authorList>
            <person name="Gundlach J."/>
            <person name="Mehne F.M."/>
            <person name="Herzberg C."/>
            <person name="Kampf J."/>
            <person name="Valerius O."/>
            <person name="Kaever V."/>
            <person name="Stuelke J."/>
        </authorList>
    </citation>
    <scope>INTERACTION WITH CDAA</scope>
    <source>
        <strain>168</strain>
    </source>
</reference>